<feature type="chain" id="PRO_1000069840" description="3-octaprenyl-4-hydroxybenzoate carboxy-lyase">
    <location>
        <begin position="1"/>
        <end position="487"/>
    </location>
</feature>
<feature type="active site" description="Proton donor" evidence="1">
    <location>
        <position position="287"/>
    </location>
</feature>
<feature type="binding site" evidence="1">
    <location>
        <position position="172"/>
    </location>
    <ligand>
        <name>Mn(2+)</name>
        <dbReference type="ChEBI" id="CHEBI:29035"/>
    </ligand>
</feature>
<feature type="binding site" evidence="1">
    <location>
        <begin position="175"/>
        <end position="177"/>
    </location>
    <ligand>
        <name>prenylated FMN</name>
        <dbReference type="ChEBI" id="CHEBI:87746"/>
    </ligand>
</feature>
<feature type="binding site" evidence="1">
    <location>
        <begin position="189"/>
        <end position="191"/>
    </location>
    <ligand>
        <name>prenylated FMN</name>
        <dbReference type="ChEBI" id="CHEBI:87746"/>
    </ligand>
</feature>
<feature type="binding site" evidence="1">
    <location>
        <begin position="194"/>
        <end position="195"/>
    </location>
    <ligand>
        <name>prenylated FMN</name>
        <dbReference type="ChEBI" id="CHEBI:87746"/>
    </ligand>
</feature>
<feature type="binding site" evidence="1">
    <location>
        <position position="238"/>
    </location>
    <ligand>
        <name>Mn(2+)</name>
        <dbReference type="ChEBI" id="CHEBI:29035"/>
    </ligand>
</feature>
<dbReference type="EC" id="4.1.1.98" evidence="1"/>
<dbReference type="EMBL" id="CP000569">
    <property type="protein sequence ID" value="ABN74523.1"/>
    <property type="molecule type" value="Genomic_DNA"/>
</dbReference>
<dbReference type="RefSeq" id="WP_011848593.1">
    <property type="nucleotide sequence ID" value="NC_009053.1"/>
</dbReference>
<dbReference type="SMR" id="A3N287"/>
<dbReference type="STRING" id="416269.APL_1439"/>
<dbReference type="EnsemblBacteria" id="ABN74523">
    <property type="protein sequence ID" value="ABN74523"/>
    <property type="gene ID" value="APL_1439"/>
</dbReference>
<dbReference type="KEGG" id="apl:APL_1439"/>
<dbReference type="PATRIC" id="fig|416269.6.peg.1498"/>
<dbReference type="eggNOG" id="COG0043">
    <property type="taxonomic scope" value="Bacteria"/>
</dbReference>
<dbReference type="HOGENOM" id="CLU_023348_4_1_6"/>
<dbReference type="UniPathway" id="UPA00232"/>
<dbReference type="Proteomes" id="UP000001432">
    <property type="component" value="Chromosome"/>
</dbReference>
<dbReference type="GO" id="GO:0005829">
    <property type="term" value="C:cytosol"/>
    <property type="evidence" value="ECO:0007669"/>
    <property type="project" value="TreeGrafter"/>
</dbReference>
<dbReference type="GO" id="GO:0005886">
    <property type="term" value="C:plasma membrane"/>
    <property type="evidence" value="ECO:0007669"/>
    <property type="project" value="UniProtKB-SubCell"/>
</dbReference>
<dbReference type="GO" id="GO:0008694">
    <property type="term" value="F:3-octaprenyl-4-hydroxybenzoate carboxy-lyase activity"/>
    <property type="evidence" value="ECO:0007669"/>
    <property type="project" value="UniProtKB-UniRule"/>
</dbReference>
<dbReference type="GO" id="GO:0046872">
    <property type="term" value="F:metal ion binding"/>
    <property type="evidence" value="ECO:0007669"/>
    <property type="project" value="UniProtKB-KW"/>
</dbReference>
<dbReference type="GO" id="GO:0006744">
    <property type="term" value="P:ubiquinone biosynthetic process"/>
    <property type="evidence" value="ECO:0007669"/>
    <property type="project" value="UniProtKB-UniRule"/>
</dbReference>
<dbReference type="FunFam" id="1.20.5.570:FF:000001">
    <property type="entry name" value="3-octaprenyl-4-hydroxybenzoate carboxy-lyase"/>
    <property type="match status" value="1"/>
</dbReference>
<dbReference type="FunFam" id="3.40.1670.10:FF:000001">
    <property type="entry name" value="3-octaprenyl-4-hydroxybenzoate carboxy-lyase"/>
    <property type="match status" value="1"/>
</dbReference>
<dbReference type="Gene3D" id="1.20.5.570">
    <property type="entry name" value="Single helix bin"/>
    <property type="match status" value="1"/>
</dbReference>
<dbReference type="Gene3D" id="3.40.1670.10">
    <property type="entry name" value="UbiD C-terminal domain-like"/>
    <property type="match status" value="1"/>
</dbReference>
<dbReference type="HAMAP" id="MF_01636">
    <property type="entry name" value="UbiD"/>
    <property type="match status" value="1"/>
</dbReference>
<dbReference type="InterPro" id="IPR002830">
    <property type="entry name" value="UbiD"/>
</dbReference>
<dbReference type="InterPro" id="IPR049381">
    <property type="entry name" value="UbiD-like_C"/>
</dbReference>
<dbReference type="InterPro" id="IPR049383">
    <property type="entry name" value="UbiD-like_N"/>
</dbReference>
<dbReference type="InterPro" id="IPR023677">
    <property type="entry name" value="UbiD_bacteria"/>
</dbReference>
<dbReference type="InterPro" id="IPR048304">
    <property type="entry name" value="UbiD_Rift_dom"/>
</dbReference>
<dbReference type="NCBIfam" id="NF008175">
    <property type="entry name" value="PRK10922.1"/>
    <property type="match status" value="1"/>
</dbReference>
<dbReference type="NCBIfam" id="TIGR00148">
    <property type="entry name" value="UbiD family decarboxylase"/>
    <property type="match status" value="1"/>
</dbReference>
<dbReference type="PANTHER" id="PTHR30108">
    <property type="entry name" value="3-OCTAPRENYL-4-HYDROXYBENZOATE CARBOXY-LYASE-RELATED"/>
    <property type="match status" value="1"/>
</dbReference>
<dbReference type="PANTHER" id="PTHR30108:SF17">
    <property type="entry name" value="FERULIC ACID DECARBOXYLASE 1"/>
    <property type="match status" value="1"/>
</dbReference>
<dbReference type="Pfam" id="PF01977">
    <property type="entry name" value="UbiD"/>
    <property type="match status" value="1"/>
</dbReference>
<dbReference type="Pfam" id="PF20696">
    <property type="entry name" value="UbiD_C"/>
    <property type="match status" value="1"/>
</dbReference>
<dbReference type="Pfam" id="PF20695">
    <property type="entry name" value="UbiD_N"/>
    <property type="match status" value="1"/>
</dbReference>
<dbReference type="SUPFAM" id="SSF50475">
    <property type="entry name" value="FMN-binding split barrel"/>
    <property type="match status" value="1"/>
</dbReference>
<dbReference type="SUPFAM" id="SSF143968">
    <property type="entry name" value="UbiD C-terminal domain-like"/>
    <property type="match status" value="1"/>
</dbReference>
<gene>
    <name evidence="1" type="primary">ubiD</name>
    <name type="ordered locus">APL_1439</name>
</gene>
<keyword id="KW-1003">Cell membrane</keyword>
<keyword id="KW-0210">Decarboxylase</keyword>
<keyword id="KW-0285">Flavoprotein</keyword>
<keyword id="KW-0288">FMN</keyword>
<keyword id="KW-0456">Lyase</keyword>
<keyword id="KW-0464">Manganese</keyword>
<keyword id="KW-0472">Membrane</keyword>
<keyword id="KW-0479">Metal-binding</keyword>
<keyword id="KW-1185">Reference proteome</keyword>
<keyword id="KW-0831">Ubiquinone biosynthesis</keyword>
<reference key="1">
    <citation type="journal article" date="2008" name="J. Bacteriol.">
        <title>The complete genome sequence of Actinobacillus pleuropneumoniae L20 (serotype 5b).</title>
        <authorList>
            <person name="Foote S.J."/>
            <person name="Bosse J.T."/>
            <person name="Bouevitch A.B."/>
            <person name="Langford P.R."/>
            <person name="Young N.M."/>
            <person name="Nash J.H.E."/>
        </authorList>
    </citation>
    <scope>NUCLEOTIDE SEQUENCE [LARGE SCALE GENOMIC DNA]</scope>
    <source>
        <strain>L20</strain>
    </source>
</reference>
<sequence>MKYKDLREFLTLLEGQGELVRIKQEIDPYLEMAEISDRTLRKGGPAILFENPKGYRMPVLCNLFGTPKRVALGMGQEDTHALRELGKLLAFLKEPEPPKGFKELIGQLPQWKQVLNMPSKVLGKADCQQVVLSGDEVELYKLPIMHCHEGDVAPLVAWGLTITQGPYKKRQNLGIYRQQLIGKNKLIMRWLSHRGGALDFHEWKEANPDKPFPVSVAIGADPATILAAVTPIPDTLSEYAFAGLLRGQKTEVTKSISNDLEVPASAEIVLEGYIDPNETALEGPYGDHTGYYNEQEYFPVFTVTHITMRRDAIYHSTYTGRPPDEPAVLGEALNEVFIPILQKQFPEIVDFYLPPEGCSYRLAVVTIKKQYAGHAKRVMMGVWSFLRQFMYTKFVIVCDDDVNARDWKDVIWAITTRCDPSRDTTLIDHTPIDYLDFASPIAGLGSKMGIDATNKWPGETSREWGTPIKKDPNVVKRVDEIWDQLGL</sequence>
<comment type="function">
    <text evidence="1">Catalyzes the decarboxylation of 3-octaprenyl-4-hydroxy benzoate to 2-octaprenylphenol, an intermediate step in ubiquinone biosynthesis.</text>
</comment>
<comment type="catalytic activity">
    <reaction evidence="1">
        <text>a 4-hydroxy-3-(all-trans-polyprenyl)benzoate + H(+) = a 2-(all-trans-polyprenyl)phenol + CO2</text>
        <dbReference type="Rhea" id="RHEA:41680"/>
        <dbReference type="Rhea" id="RHEA-COMP:9514"/>
        <dbReference type="Rhea" id="RHEA-COMP:9516"/>
        <dbReference type="ChEBI" id="CHEBI:1269"/>
        <dbReference type="ChEBI" id="CHEBI:15378"/>
        <dbReference type="ChEBI" id="CHEBI:16526"/>
        <dbReference type="ChEBI" id="CHEBI:78396"/>
        <dbReference type="EC" id="4.1.1.98"/>
    </reaction>
</comment>
<comment type="cofactor">
    <cofactor evidence="1">
        <name>prenylated FMN</name>
        <dbReference type="ChEBI" id="CHEBI:87746"/>
    </cofactor>
    <text evidence="1">Binds 1 prenylated FMN per subunit.</text>
</comment>
<comment type="cofactor">
    <cofactor evidence="1">
        <name>Mn(2+)</name>
        <dbReference type="ChEBI" id="CHEBI:29035"/>
    </cofactor>
</comment>
<comment type="pathway">
    <text evidence="1">Cofactor biosynthesis; ubiquinone biosynthesis.</text>
</comment>
<comment type="subunit">
    <text evidence="1">Homohexamer.</text>
</comment>
<comment type="subcellular location">
    <subcellularLocation>
        <location evidence="1">Cell membrane</location>
        <topology evidence="1">Peripheral membrane protein</topology>
    </subcellularLocation>
</comment>
<comment type="similarity">
    <text evidence="1">Belongs to the UbiD family.</text>
</comment>
<proteinExistence type="inferred from homology"/>
<evidence type="ECO:0000255" key="1">
    <source>
        <dbReference type="HAMAP-Rule" id="MF_01636"/>
    </source>
</evidence>
<organism>
    <name type="scientific">Actinobacillus pleuropneumoniae serotype 5b (strain L20)</name>
    <dbReference type="NCBI Taxonomy" id="416269"/>
    <lineage>
        <taxon>Bacteria</taxon>
        <taxon>Pseudomonadati</taxon>
        <taxon>Pseudomonadota</taxon>
        <taxon>Gammaproteobacteria</taxon>
        <taxon>Pasteurellales</taxon>
        <taxon>Pasteurellaceae</taxon>
        <taxon>Actinobacillus</taxon>
    </lineage>
</organism>
<accession>A3N287</accession>
<name>UBID_ACTP2</name>
<protein>
    <recommendedName>
        <fullName evidence="1">3-octaprenyl-4-hydroxybenzoate carboxy-lyase</fullName>
        <ecNumber evidence="1">4.1.1.98</ecNumber>
    </recommendedName>
    <alternativeName>
        <fullName evidence="1">Polyprenyl p-hydroxybenzoate decarboxylase</fullName>
    </alternativeName>
</protein>